<organism>
    <name type="scientific">Xenopus laevis</name>
    <name type="common">African clawed frog</name>
    <dbReference type="NCBI Taxonomy" id="8355"/>
    <lineage>
        <taxon>Eukaryota</taxon>
        <taxon>Metazoa</taxon>
        <taxon>Chordata</taxon>
        <taxon>Craniata</taxon>
        <taxon>Vertebrata</taxon>
        <taxon>Euteleostomi</taxon>
        <taxon>Amphibia</taxon>
        <taxon>Batrachia</taxon>
        <taxon>Anura</taxon>
        <taxon>Pipoidea</taxon>
        <taxon>Pipidae</taxon>
        <taxon>Xenopodinae</taxon>
        <taxon>Xenopus</taxon>
        <taxon>Xenopus</taxon>
    </lineage>
</organism>
<comment type="function">
    <text evidence="1">May be involved in Golgi maintenance and protein secretion.</text>
</comment>
<comment type="subcellular location">
    <subcellularLocation>
        <location evidence="1">Golgi apparatus membrane</location>
        <topology evidence="2">Single-pass membrane protein</topology>
    </subcellularLocation>
    <subcellularLocation>
        <location evidence="1">Cytoplasm</location>
    </subcellularLocation>
</comment>
<comment type="alternative products">
    <event type="alternative splicing"/>
    <isoform>
        <id>Q6DCT2-1</id>
        <name>1</name>
        <sequence type="displayed"/>
    </isoform>
    <isoform>
        <id>Q6DCT2-2</id>
        <name>2</name>
        <sequence type="described" ref="VSP_024555"/>
    </isoform>
</comment>
<comment type="similarity">
    <text evidence="4">Belongs to the ARMH3 family.</text>
</comment>
<comment type="sequence caution" evidence="4">
    <conflict type="erroneous initiation">
        <sequence resource="EMBL-CDS" id="AAH77914"/>
    </conflict>
    <text>Truncated N-terminus.</text>
</comment>
<proteinExistence type="evidence at transcript level"/>
<accession>Q6DCT2</accession>
<accession>Q5HZ90</accession>
<dbReference type="EMBL" id="BC077914">
    <property type="protein sequence ID" value="AAH77914.1"/>
    <property type="status" value="ALT_INIT"/>
    <property type="molecule type" value="mRNA"/>
</dbReference>
<dbReference type="EMBL" id="BC089132">
    <property type="protein sequence ID" value="AAH89132.1"/>
    <property type="molecule type" value="mRNA"/>
</dbReference>
<dbReference type="RefSeq" id="NP_001087026.2">
    <molecule id="Q6DCT2-1"/>
    <property type="nucleotide sequence ID" value="NM_001093557.1"/>
</dbReference>
<dbReference type="DNASU" id="446861"/>
<dbReference type="GeneID" id="446861"/>
<dbReference type="KEGG" id="xla:446861"/>
<dbReference type="AGR" id="Xenbase:XB-GENE-5897006"/>
<dbReference type="CTD" id="446861"/>
<dbReference type="Xenbase" id="XB-GENE-5897006">
    <property type="gene designation" value="armh3.L"/>
</dbReference>
<dbReference type="OMA" id="YEATHLN"/>
<dbReference type="OrthoDB" id="2012278at2759"/>
<dbReference type="Proteomes" id="UP000186698">
    <property type="component" value="Chromosome 7L"/>
</dbReference>
<dbReference type="Bgee" id="446861">
    <property type="expression patterns" value="Expressed in egg cell and 19 other cell types or tissues"/>
</dbReference>
<dbReference type="GO" id="GO:0005829">
    <property type="term" value="C:cytosol"/>
    <property type="evidence" value="ECO:0000250"/>
    <property type="project" value="UniProtKB"/>
</dbReference>
<dbReference type="GO" id="GO:0000139">
    <property type="term" value="C:Golgi membrane"/>
    <property type="evidence" value="ECO:0000250"/>
    <property type="project" value="UniProtKB"/>
</dbReference>
<dbReference type="GO" id="GO:1903358">
    <property type="term" value="P:regulation of Golgi organization"/>
    <property type="evidence" value="ECO:0000250"/>
    <property type="project" value="UniProtKB"/>
</dbReference>
<dbReference type="InterPro" id="IPR039868">
    <property type="entry name" value="ARMD3-like"/>
</dbReference>
<dbReference type="InterPro" id="IPR013636">
    <property type="entry name" value="ARMH3_C"/>
</dbReference>
<dbReference type="PANTHER" id="PTHR13608">
    <property type="entry name" value="ARMADILLO-LIKE HELICAL DOMAIN-CONTAINING PROTEIN 3"/>
    <property type="match status" value="1"/>
</dbReference>
<dbReference type="PANTHER" id="PTHR13608:SF3">
    <property type="entry name" value="ARMADILLO-LIKE HELICAL DOMAIN-CONTAINING PROTEIN 3"/>
    <property type="match status" value="1"/>
</dbReference>
<dbReference type="Pfam" id="PF08427">
    <property type="entry name" value="ARMH3_C"/>
    <property type="match status" value="1"/>
</dbReference>
<dbReference type="SMART" id="SM01158">
    <property type="entry name" value="DUF1741"/>
    <property type="match status" value="1"/>
</dbReference>
<reference key="1">
    <citation type="submission" date="2004-07" db="EMBL/GenBank/DDBJ databases">
        <authorList>
            <consortium name="NIH - Xenopus Gene Collection (XGC) project"/>
        </authorList>
    </citation>
    <scope>NUCLEOTIDE SEQUENCE [LARGE SCALE MRNA] (ISOFORMS 1 AND 2)</scope>
    <source>
        <tissue>Egg</tissue>
        <tissue>Embryo</tissue>
    </source>
</reference>
<gene>
    <name evidence="1" type="primary">armh3</name>
</gene>
<feature type="chain" id="PRO_0000284518" description="Armadillo-like helical domain-containing protein 3">
    <location>
        <begin position="1"/>
        <end position="689"/>
    </location>
</feature>
<feature type="transmembrane region" description="Helical" evidence="2">
    <location>
        <begin position="520"/>
        <end position="538"/>
    </location>
</feature>
<feature type="splice variant" id="VSP_024555" description="In isoform 2." evidence="3">
    <location>
        <begin position="1"/>
        <end position="415"/>
    </location>
</feature>
<keyword id="KW-0025">Alternative splicing</keyword>
<keyword id="KW-0963">Cytoplasm</keyword>
<keyword id="KW-0333">Golgi apparatus</keyword>
<keyword id="KW-0472">Membrane</keyword>
<keyword id="KW-1185">Reference proteome</keyword>
<keyword id="KW-0812">Transmembrane</keyword>
<keyword id="KW-1133">Transmembrane helix</keyword>
<protein>
    <recommendedName>
        <fullName evidence="1">Armadillo-like helical domain-containing protein 3</fullName>
    </recommendedName>
</protein>
<sequence>MAQIEKKVGLLRKSSASKKPLKEKVVLMYDEIFTKEDPTKSNPRFWDELFLMKVNIEYLESKLESLDGEELMKLKDNINSLFQHCIHALRAEHQIRVVNSLQTLCALIRGVHQKNKPTSGFDIINMLMGFDKAELRMKNLMESLDLLLCGDGSESLKSLCLKLLLCLVTVTDNISQNTILEYVMINSIFEAILQILSNPLSRRQHGYDAVVLLALLVNYRKYESVNPYIVKLSIVDDENTLNGMGLVIARALFEYNRQYTDKEEENQTGFFSALTNMVGSMFIADADEKISVQTNEAILLALYEAVHLNRNFITVLAQSHPEMGLVAVPISPIPTTPTSPLGTTPPSSDVISPTELPMDADVQTSNLLITFLKYSSIVMQDTKDEHRLNSGKLCLIILTCIAEDQYANAFLHDDNMNFRVNLHRMPMRHRKKAADKNIPCRPLVCAVLDLMVEFIVTHMMKDFPMDLYTRCIQIVHKVLCYQKKCRVRLHYTWRELWLALINLLKFLMSNETVLLAKHNIFTLTLMVVNLFNMFITYGDTFLPTPSSYDELYYEIIRMHQIFDNLYSMVLRLSTNAGQWKEPASKVTHSLVNIRAIINHFNPKIESYAAVNHISQLSEEQVLEVVRSNYDTLTLKLQDGLDQYERYSEQHKEAAFFKELARSISINVRKNVAFNTLSQEILLKEFSTIS</sequence>
<name>ARMD3_XENLA</name>
<evidence type="ECO:0000250" key="1">
    <source>
        <dbReference type="UniProtKB" id="Q5T2E6"/>
    </source>
</evidence>
<evidence type="ECO:0000255" key="2"/>
<evidence type="ECO:0000303" key="3">
    <source ref="1"/>
</evidence>
<evidence type="ECO:0000305" key="4"/>